<keyword id="KW-0961">Cell wall biogenesis/degradation</keyword>
<keyword id="KW-0963">Cytoplasm</keyword>
<keyword id="KW-0596">Phosphopantetheine</keyword>
<keyword id="KW-0597">Phosphoprotein</keyword>
<comment type="function">
    <text evidence="1">Carrier protein involved in the D-alanylation of lipoteichoic acid (LTA). The loading of thioester-linked D-alanine onto DltC is catalyzed by D-alanine--D-alanyl carrier protein ligase DltA. The DltC-carried D-alanyl group is further transferred to cell membrane phosphatidylglycerol (PG) by forming an ester bond, probably catalyzed by DltD. D-alanylation of LTA plays an important role in modulating the properties of the cell wall in Gram-positive bacteria, influencing the net charge of the cell wall.</text>
</comment>
<comment type="pathway">
    <text evidence="1">Cell wall biogenesis; lipoteichoic acid biosynthesis.</text>
</comment>
<comment type="subcellular location">
    <subcellularLocation>
        <location evidence="1">Cytoplasm</location>
    </subcellularLocation>
</comment>
<comment type="PTM">
    <text evidence="1">4'-phosphopantetheine is transferred from CoA to a specific serine of apo-DCP.</text>
</comment>
<comment type="similarity">
    <text evidence="1">Belongs to the DltC family.</text>
</comment>
<reference key="1">
    <citation type="submission" date="2008-10" db="EMBL/GenBank/DDBJ databases">
        <title>Genome sequence of Bacillus cereus G9842.</title>
        <authorList>
            <person name="Dodson R.J."/>
            <person name="Durkin A.S."/>
            <person name="Rosovitz M.J."/>
            <person name="Rasko D.A."/>
            <person name="Hoffmaster A."/>
            <person name="Ravel J."/>
            <person name="Sutton G."/>
        </authorList>
    </citation>
    <scope>NUCLEOTIDE SEQUENCE [LARGE SCALE GENOMIC DNA]</scope>
    <source>
        <strain>G9842</strain>
    </source>
</reference>
<dbReference type="EMBL" id="CP001186">
    <property type="protein sequence ID" value="ACK96702.1"/>
    <property type="molecule type" value="Genomic_DNA"/>
</dbReference>
<dbReference type="RefSeq" id="WP_000807310.1">
    <property type="nucleotide sequence ID" value="NC_011772.1"/>
</dbReference>
<dbReference type="SMR" id="B7IN62"/>
<dbReference type="GeneID" id="93009671"/>
<dbReference type="KEGG" id="bcg:BCG9842_B3922"/>
<dbReference type="HOGENOM" id="CLU_108696_19_0_9"/>
<dbReference type="UniPathway" id="UPA00556"/>
<dbReference type="Proteomes" id="UP000006744">
    <property type="component" value="Chromosome"/>
</dbReference>
<dbReference type="GO" id="GO:0005737">
    <property type="term" value="C:cytoplasm"/>
    <property type="evidence" value="ECO:0007669"/>
    <property type="project" value="UniProtKB-SubCell"/>
</dbReference>
<dbReference type="GO" id="GO:0036370">
    <property type="term" value="F:D-alanyl carrier activity"/>
    <property type="evidence" value="ECO:0007669"/>
    <property type="project" value="UniProtKB-UniRule"/>
</dbReference>
<dbReference type="GO" id="GO:0071555">
    <property type="term" value="P:cell wall organization"/>
    <property type="evidence" value="ECO:0007669"/>
    <property type="project" value="UniProtKB-KW"/>
</dbReference>
<dbReference type="GO" id="GO:0070395">
    <property type="term" value="P:lipoteichoic acid biosynthetic process"/>
    <property type="evidence" value="ECO:0007669"/>
    <property type="project" value="UniProtKB-UniRule"/>
</dbReference>
<dbReference type="FunFam" id="1.10.1200.10:FF:000004">
    <property type="entry name" value="D-alanyl carrier protein"/>
    <property type="match status" value="1"/>
</dbReference>
<dbReference type="Gene3D" id="1.10.1200.10">
    <property type="entry name" value="ACP-like"/>
    <property type="match status" value="1"/>
</dbReference>
<dbReference type="HAMAP" id="MF_00565">
    <property type="entry name" value="DltC"/>
    <property type="match status" value="1"/>
</dbReference>
<dbReference type="InterPro" id="IPR036736">
    <property type="entry name" value="ACP-like_sf"/>
</dbReference>
<dbReference type="InterPro" id="IPR003230">
    <property type="entry name" value="DltC"/>
</dbReference>
<dbReference type="InterPro" id="IPR009081">
    <property type="entry name" value="PP-bd_ACP"/>
</dbReference>
<dbReference type="NCBIfam" id="TIGR01688">
    <property type="entry name" value="dltC"/>
    <property type="match status" value="1"/>
</dbReference>
<dbReference type="NCBIfam" id="NF003464">
    <property type="entry name" value="PRK05087.1"/>
    <property type="match status" value="1"/>
</dbReference>
<dbReference type="Pfam" id="PF00550">
    <property type="entry name" value="PP-binding"/>
    <property type="match status" value="1"/>
</dbReference>
<dbReference type="SUPFAM" id="SSF47336">
    <property type="entry name" value="ACP-like"/>
    <property type="match status" value="1"/>
</dbReference>
<dbReference type="PROSITE" id="PS50075">
    <property type="entry name" value="CARRIER"/>
    <property type="match status" value="1"/>
</dbReference>
<organism>
    <name type="scientific">Bacillus cereus (strain G9842)</name>
    <dbReference type="NCBI Taxonomy" id="405531"/>
    <lineage>
        <taxon>Bacteria</taxon>
        <taxon>Bacillati</taxon>
        <taxon>Bacillota</taxon>
        <taxon>Bacilli</taxon>
        <taxon>Bacillales</taxon>
        <taxon>Bacillaceae</taxon>
        <taxon>Bacillus</taxon>
        <taxon>Bacillus cereus group</taxon>
    </lineage>
</organism>
<protein>
    <recommendedName>
        <fullName evidence="1">D-alanyl carrier protein</fullName>
        <shortName evidence="1">DCP</shortName>
    </recommendedName>
    <alternativeName>
        <fullName evidence="1">D-alanine--poly(phosphoribitol) ligase subunit 2</fullName>
    </alternativeName>
</protein>
<accession>B7IN62</accession>
<proteinExistence type="inferred from homology"/>
<evidence type="ECO:0000255" key="1">
    <source>
        <dbReference type="HAMAP-Rule" id="MF_00565"/>
    </source>
</evidence>
<gene>
    <name evidence="1" type="primary">dltC</name>
    <name type="ordered locus">BCG9842_B3922</name>
</gene>
<sequence length="79" mass="9261">MAEFKEQVLDILEEVCENDIVKENLDVQLFEEGILDSFAVVSLLVEFQERLDIEVSISDFDRDEWATPNMVIKKLEEIR</sequence>
<feature type="chain" id="PRO_1000129395" description="D-alanyl carrier protein">
    <location>
        <begin position="1"/>
        <end position="79"/>
    </location>
</feature>
<feature type="domain" description="Carrier" evidence="1">
    <location>
        <begin position="2"/>
        <end position="79"/>
    </location>
</feature>
<feature type="modified residue" description="O-(pantetheine 4'-phosphoryl)serine" evidence="1">
    <location>
        <position position="37"/>
    </location>
</feature>
<name>DLTC_BACC2</name>